<organism>
    <name type="scientific">Ehrlichia ruminantium (strain Welgevonden)</name>
    <dbReference type="NCBI Taxonomy" id="254945"/>
    <lineage>
        <taxon>Bacteria</taxon>
        <taxon>Pseudomonadati</taxon>
        <taxon>Pseudomonadota</taxon>
        <taxon>Alphaproteobacteria</taxon>
        <taxon>Rickettsiales</taxon>
        <taxon>Anaplasmataceae</taxon>
        <taxon>Ehrlichia</taxon>
    </lineage>
</organism>
<comment type="function">
    <text evidence="1">Formation of pseudouridine at positions 38, 39 and 40 in the anticodon stem and loop of transfer RNAs.</text>
</comment>
<comment type="catalytic activity">
    <reaction evidence="1">
        <text>uridine(38/39/40) in tRNA = pseudouridine(38/39/40) in tRNA</text>
        <dbReference type="Rhea" id="RHEA:22376"/>
        <dbReference type="Rhea" id="RHEA-COMP:10085"/>
        <dbReference type="Rhea" id="RHEA-COMP:10087"/>
        <dbReference type="ChEBI" id="CHEBI:65314"/>
        <dbReference type="ChEBI" id="CHEBI:65315"/>
        <dbReference type="EC" id="5.4.99.12"/>
    </reaction>
</comment>
<comment type="subunit">
    <text evidence="1">Homodimer.</text>
</comment>
<comment type="similarity">
    <text evidence="1">Belongs to the tRNA pseudouridine synthase TruA family.</text>
</comment>
<keyword id="KW-0413">Isomerase</keyword>
<keyword id="KW-0819">tRNA processing</keyword>
<dbReference type="EC" id="5.4.99.12" evidence="1"/>
<dbReference type="EMBL" id="CR767821">
    <property type="protein sequence ID" value="CAH58149.1"/>
    <property type="molecule type" value="Genomic_DNA"/>
</dbReference>
<dbReference type="EMBL" id="CR925678">
    <property type="protein sequence ID" value="CAI26935.1"/>
    <property type="molecule type" value="Genomic_DNA"/>
</dbReference>
<dbReference type="RefSeq" id="WP_011155107.1">
    <property type="nucleotide sequence ID" value="NC_005295.2"/>
</dbReference>
<dbReference type="SMR" id="Q5HBA4"/>
<dbReference type="GeneID" id="33058027"/>
<dbReference type="KEGG" id="eru:Erum4240"/>
<dbReference type="KEGG" id="erw:ERWE_CDS_04410"/>
<dbReference type="eggNOG" id="COG0101">
    <property type="taxonomic scope" value="Bacteria"/>
</dbReference>
<dbReference type="HOGENOM" id="CLU_014673_0_2_5"/>
<dbReference type="Proteomes" id="UP000001021">
    <property type="component" value="Chromosome"/>
</dbReference>
<dbReference type="GO" id="GO:0003723">
    <property type="term" value="F:RNA binding"/>
    <property type="evidence" value="ECO:0007669"/>
    <property type="project" value="InterPro"/>
</dbReference>
<dbReference type="GO" id="GO:0160147">
    <property type="term" value="F:tRNA pseudouridine(38-40) synthase activity"/>
    <property type="evidence" value="ECO:0007669"/>
    <property type="project" value="UniProtKB-EC"/>
</dbReference>
<dbReference type="GO" id="GO:0031119">
    <property type="term" value="P:tRNA pseudouridine synthesis"/>
    <property type="evidence" value="ECO:0007669"/>
    <property type="project" value="UniProtKB-UniRule"/>
</dbReference>
<dbReference type="CDD" id="cd02570">
    <property type="entry name" value="PseudoU_synth_EcTruA"/>
    <property type="match status" value="1"/>
</dbReference>
<dbReference type="FunFam" id="3.30.70.580:FF:000001">
    <property type="entry name" value="tRNA pseudouridine synthase A"/>
    <property type="match status" value="1"/>
</dbReference>
<dbReference type="Gene3D" id="3.30.70.660">
    <property type="entry name" value="Pseudouridine synthase I, catalytic domain, C-terminal subdomain"/>
    <property type="match status" value="1"/>
</dbReference>
<dbReference type="Gene3D" id="3.30.70.580">
    <property type="entry name" value="Pseudouridine synthase I, catalytic domain, N-terminal subdomain"/>
    <property type="match status" value="1"/>
</dbReference>
<dbReference type="HAMAP" id="MF_00171">
    <property type="entry name" value="TruA"/>
    <property type="match status" value="1"/>
</dbReference>
<dbReference type="InterPro" id="IPR020103">
    <property type="entry name" value="PsdUridine_synth_cat_dom_sf"/>
</dbReference>
<dbReference type="InterPro" id="IPR001406">
    <property type="entry name" value="PsdUridine_synth_TruA"/>
</dbReference>
<dbReference type="InterPro" id="IPR020097">
    <property type="entry name" value="PsdUridine_synth_TruA_a/b_dom"/>
</dbReference>
<dbReference type="InterPro" id="IPR020095">
    <property type="entry name" value="PsdUridine_synth_TruA_C"/>
</dbReference>
<dbReference type="InterPro" id="IPR020094">
    <property type="entry name" value="TruA/RsuA/RluB/E/F_N"/>
</dbReference>
<dbReference type="NCBIfam" id="TIGR00071">
    <property type="entry name" value="hisT_truA"/>
    <property type="match status" value="1"/>
</dbReference>
<dbReference type="PANTHER" id="PTHR11142">
    <property type="entry name" value="PSEUDOURIDYLATE SYNTHASE"/>
    <property type="match status" value="1"/>
</dbReference>
<dbReference type="PANTHER" id="PTHR11142:SF0">
    <property type="entry name" value="TRNA PSEUDOURIDINE SYNTHASE-LIKE 1"/>
    <property type="match status" value="1"/>
</dbReference>
<dbReference type="Pfam" id="PF01416">
    <property type="entry name" value="PseudoU_synth_1"/>
    <property type="match status" value="2"/>
</dbReference>
<dbReference type="PIRSF" id="PIRSF001430">
    <property type="entry name" value="tRNA_psdUrid_synth"/>
    <property type="match status" value="1"/>
</dbReference>
<dbReference type="SUPFAM" id="SSF55120">
    <property type="entry name" value="Pseudouridine synthase"/>
    <property type="match status" value="1"/>
</dbReference>
<proteinExistence type="inferred from homology"/>
<accession>Q5HBA4</accession>
<accession>Q5FEW2</accession>
<name>TRUA_EHRRW</name>
<gene>
    <name evidence="1" type="primary">truA</name>
    <name type="ordered locus">Erum4240</name>
    <name type="ordered locus">ERWE_CDS_04410</name>
</gene>
<protein>
    <recommendedName>
        <fullName evidence="1">tRNA pseudouridine synthase A</fullName>
        <ecNumber evidence="1">5.4.99.12</ecNumber>
    </recommendedName>
    <alternativeName>
        <fullName evidence="1">tRNA pseudouridine(38-40) synthase</fullName>
    </alternativeName>
    <alternativeName>
        <fullName evidence="1">tRNA pseudouridylate synthase I</fullName>
    </alternativeName>
    <alternativeName>
        <fullName evidence="1">tRNA-uridine isomerase I</fullName>
    </alternativeName>
</protein>
<feature type="chain" id="PRO_0000057379" description="tRNA pseudouridine synthase A">
    <location>
        <begin position="1"/>
        <end position="246"/>
    </location>
</feature>
<feature type="active site" description="Nucleophile" evidence="1">
    <location>
        <position position="52"/>
    </location>
</feature>
<feature type="binding site" evidence="1">
    <location>
        <position position="111"/>
    </location>
    <ligand>
        <name>substrate</name>
    </ligand>
</feature>
<evidence type="ECO:0000255" key="1">
    <source>
        <dbReference type="HAMAP-Rule" id="MF_00171"/>
    </source>
</evidence>
<sequence length="246" mass="28271">MRYKIVIEYDGSDFIGWQKQNHNSNSIQEILEKAIFKFSKQHVIVYGAGRTDAGVHALGQVAHFDLTTDFETYIVRNAINYHLISHAIAVVHVEKTDTDFHARFSAKRRYYLYKIVNRYSPLTIDRNRAWLVHTPLNVENMIKAVCYIKGNHNFSSFRAKCCQSKSPIKTVDNLSITYNHPYIDINISAISFLHHQVRIIVGTLVECGKGYFPPEHIKTIMEANNRSYAGTTAPSYGLYFVKVDYS</sequence>
<reference key="1">
    <citation type="journal article" date="2005" name="Proc. Natl. Acad. Sci. U.S.A.">
        <title>The genome of the heartwater agent Ehrlichia ruminantium contains multiple tandem repeats of actively variable copy number.</title>
        <authorList>
            <person name="Collins N.E."/>
            <person name="Liebenberg J."/>
            <person name="de Villiers E.P."/>
            <person name="Brayton K.A."/>
            <person name="Louw E."/>
            <person name="Pretorius A."/>
            <person name="Faber F.E."/>
            <person name="van Heerden H."/>
            <person name="Josemans A."/>
            <person name="van Kleef M."/>
            <person name="Steyn H.C."/>
            <person name="van Strijp M.F."/>
            <person name="Zweygarth E."/>
            <person name="Jongejan F."/>
            <person name="Maillard J.C."/>
            <person name="Berthier D."/>
            <person name="Botha M."/>
            <person name="Joubert F."/>
            <person name="Corton C.H."/>
            <person name="Thomson N.R."/>
            <person name="Allsopp M.T."/>
            <person name="Allsopp B.A."/>
        </authorList>
    </citation>
    <scope>NUCLEOTIDE SEQUENCE [LARGE SCALE GENOMIC DNA]</scope>
    <source>
        <strain>Welgevonden</strain>
    </source>
</reference>
<reference key="2">
    <citation type="journal article" date="2006" name="J. Bacteriol.">
        <title>Comparative genomic analysis of three strains of Ehrlichia ruminantium reveals an active process of genome size plasticity.</title>
        <authorList>
            <person name="Frutos R."/>
            <person name="Viari A."/>
            <person name="Ferraz C."/>
            <person name="Morgat A."/>
            <person name="Eychenie S."/>
            <person name="Kandassamy Y."/>
            <person name="Chantal I."/>
            <person name="Bensaid A."/>
            <person name="Coissac E."/>
            <person name="Vachiery N."/>
            <person name="Demaille J."/>
            <person name="Martinez D."/>
        </authorList>
    </citation>
    <scope>NUCLEOTIDE SEQUENCE [LARGE SCALE GENOMIC DNA]</scope>
    <source>
        <strain>Welgevonden</strain>
    </source>
</reference>